<reference key="1">
    <citation type="book" date="2006" name="Gram positive pathogens, 2nd edition">
        <title>The Staphylococcus aureus NCTC 8325 genome.</title>
        <editorList>
            <person name="Fischetti V."/>
            <person name="Novick R."/>
            <person name="Ferretti J."/>
            <person name="Portnoy D."/>
            <person name="Rood J."/>
        </editorList>
        <authorList>
            <person name="Gillaspy A.F."/>
            <person name="Worrell V."/>
            <person name="Orvis J."/>
            <person name="Roe B.A."/>
            <person name="Dyer D.W."/>
            <person name="Iandolo J.J."/>
        </authorList>
    </citation>
    <scope>NUCLEOTIDE SEQUENCE [LARGE SCALE GENOMIC DNA]</scope>
    <source>
        <strain>NCTC 8325 / PS 47</strain>
    </source>
</reference>
<dbReference type="EC" id="2.5.1.6" evidence="1"/>
<dbReference type="EMBL" id="CP000253">
    <property type="protein sequence ID" value="ABD30972.1"/>
    <property type="molecule type" value="Genomic_DNA"/>
</dbReference>
<dbReference type="RefSeq" id="WP_000933822.1">
    <property type="nucleotide sequence ID" value="NZ_LS483365.1"/>
</dbReference>
<dbReference type="RefSeq" id="YP_500410.1">
    <property type="nucleotide sequence ID" value="NC_007795.1"/>
</dbReference>
<dbReference type="SMR" id="Q2G1W4"/>
<dbReference type="STRING" id="93061.SAOUHSC_01909"/>
<dbReference type="PaxDb" id="1280-SAXN108_1818"/>
<dbReference type="GeneID" id="3921051"/>
<dbReference type="KEGG" id="sao:SAOUHSC_01909"/>
<dbReference type="PATRIC" id="fig|93061.5.peg.1738"/>
<dbReference type="eggNOG" id="COG0192">
    <property type="taxonomic scope" value="Bacteria"/>
</dbReference>
<dbReference type="HOGENOM" id="CLU_041802_1_1_9"/>
<dbReference type="OrthoDB" id="9801686at2"/>
<dbReference type="UniPathway" id="UPA00315">
    <property type="reaction ID" value="UER00080"/>
</dbReference>
<dbReference type="PRO" id="PR:Q2G1W4"/>
<dbReference type="Proteomes" id="UP000008816">
    <property type="component" value="Chromosome"/>
</dbReference>
<dbReference type="GO" id="GO:0005829">
    <property type="term" value="C:cytosol"/>
    <property type="evidence" value="ECO:0000318"/>
    <property type="project" value="GO_Central"/>
</dbReference>
<dbReference type="GO" id="GO:0005524">
    <property type="term" value="F:ATP binding"/>
    <property type="evidence" value="ECO:0007669"/>
    <property type="project" value="UniProtKB-UniRule"/>
</dbReference>
<dbReference type="GO" id="GO:0000287">
    <property type="term" value="F:magnesium ion binding"/>
    <property type="evidence" value="ECO:0007669"/>
    <property type="project" value="UniProtKB-UniRule"/>
</dbReference>
<dbReference type="GO" id="GO:0004478">
    <property type="term" value="F:methionine adenosyltransferase activity"/>
    <property type="evidence" value="ECO:0000318"/>
    <property type="project" value="GO_Central"/>
</dbReference>
<dbReference type="GO" id="GO:0006730">
    <property type="term" value="P:one-carbon metabolic process"/>
    <property type="evidence" value="ECO:0007669"/>
    <property type="project" value="UniProtKB-KW"/>
</dbReference>
<dbReference type="GO" id="GO:0006556">
    <property type="term" value="P:S-adenosylmethionine biosynthetic process"/>
    <property type="evidence" value="ECO:0000318"/>
    <property type="project" value="GO_Central"/>
</dbReference>
<dbReference type="CDD" id="cd18079">
    <property type="entry name" value="S-AdoMet_synt"/>
    <property type="match status" value="1"/>
</dbReference>
<dbReference type="FunFam" id="3.30.300.10:FF:000003">
    <property type="entry name" value="S-adenosylmethionine synthase"/>
    <property type="match status" value="1"/>
</dbReference>
<dbReference type="FunFam" id="3.30.300.10:FF:000004">
    <property type="entry name" value="S-adenosylmethionine synthase"/>
    <property type="match status" value="1"/>
</dbReference>
<dbReference type="Gene3D" id="3.30.300.10">
    <property type="match status" value="3"/>
</dbReference>
<dbReference type="HAMAP" id="MF_00086">
    <property type="entry name" value="S_AdoMet_synth1"/>
    <property type="match status" value="1"/>
</dbReference>
<dbReference type="InterPro" id="IPR022631">
    <property type="entry name" value="ADOMET_SYNTHASE_CS"/>
</dbReference>
<dbReference type="InterPro" id="IPR022630">
    <property type="entry name" value="S-AdoMet_synt_C"/>
</dbReference>
<dbReference type="InterPro" id="IPR022629">
    <property type="entry name" value="S-AdoMet_synt_central"/>
</dbReference>
<dbReference type="InterPro" id="IPR022628">
    <property type="entry name" value="S-AdoMet_synt_N"/>
</dbReference>
<dbReference type="InterPro" id="IPR002133">
    <property type="entry name" value="S-AdoMet_synthetase"/>
</dbReference>
<dbReference type="InterPro" id="IPR022636">
    <property type="entry name" value="S-AdoMet_synthetase_sfam"/>
</dbReference>
<dbReference type="NCBIfam" id="TIGR01034">
    <property type="entry name" value="metK"/>
    <property type="match status" value="1"/>
</dbReference>
<dbReference type="PANTHER" id="PTHR11964">
    <property type="entry name" value="S-ADENOSYLMETHIONINE SYNTHETASE"/>
    <property type="match status" value="1"/>
</dbReference>
<dbReference type="Pfam" id="PF02773">
    <property type="entry name" value="S-AdoMet_synt_C"/>
    <property type="match status" value="1"/>
</dbReference>
<dbReference type="Pfam" id="PF02772">
    <property type="entry name" value="S-AdoMet_synt_M"/>
    <property type="match status" value="1"/>
</dbReference>
<dbReference type="Pfam" id="PF00438">
    <property type="entry name" value="S-AdoMet_synt_N"/>
    <property type="match status" value="1"/>
</dbReference>
<dbReference type="PIRSF" id="PIRSF000497">
    <property type="entry name" value="MAT"/>
    <property type="match status" value="1"/>
</dbReference>
<dbReference type="SUPFAM" id="SSF55973">
    <property type="entry name" value="S-adenosylmethionine synthetase"/>
    <property type="match status" value="3"/>
</dbReference>
<dbReference type="PROSITE" id="PS00376">
    <property type="entry name" value="ADOMET_SYNTHASE_1"/>
    <property type="match status" value="1"/>
</dbReference>
<dbReference type="PROSITE" id="PS00377">
    <property type="entry name" value="ADOMET_SYNTHASE_2"/>
    <property type="match status" value="1"/>
</dbReference>
<protein>
    <recommendedName>
        <fullName evidence="1">S-adenosylmethionine synthase</fullName>
        <shortName evidence="1">AdoMet synthase</shortName>
        <ecNumber evidence="1">2.5.1.6</ecNumber>
    </recommendedName>
    <alternativeName>
        <fullName evidence="1">MAT</fullName>
    </alternativeName>
    <alternativeName>
        <fullName evidence="1">Methionine adenosyltransferase</fullName>
    </alternativeName>
</protein>
<accession>Q2G1W4</accession>
<organism>
    <name type="scientific">Staphylococcus aureus (strain NCTC 8325 / PS 47)</name>
    <dbReference type="NCBI Taxonomy" id="93061"/>
    <lineage>
        <taxon>Bacteria</taxon>
        <taxon>Bacillati</taxon>
        <taxon>Bacillota</taxon>
        <taxon>Bacilli</taxon>
        <taxon>Bacillales</taxon>
        <taxon>Staphylococcaceae</taxon>
        <taxon>Staphylococcus</taxon>
    </lineage>
</organism>
<gene>
    <name evidence="1" type="primary">metK</name>
    <name type="ordered locus">SAOUHSC_01909</name>
</gene>
<keyword id="KW-0067">ATP-binding</keyword>
<keyword id="KW-0963">Cytoplasm</keyword>
<keyword id="KW-0460">Magnesium</keyword>
<keyword id="KW-0479">Metal-binding</keyword>
<keyword id="KW-0547">Nucleotide-binding</keyword>
<keyword id="KW-0554">One-carbon metabolism</keyword>
<keyword id="KW-0630">Potassium</keyword>
<keyword id="KW-1185">Reference proteome</keyword>
<keyword id="KW-0808">Transferase</keyword>
<proteinExistence type="inferred from homology"/>
<comment type="function">
    <text evidence="1">Catalyzes the formation of S-adenosylmethionine (AdoMet) from methionine and ATP. The overall synthetic reaction is composed of two sequential steps, AdoMet formation and the subsequent tripolyphosphate hydrolysis which occurs prior to release of AdoMet from the enzyme.</text>
</comment>
<comment type="catalytic activity">
    <reaction evidence="1">
        <text>L-methionine + ATP + H2O = S-adenosyl-L-methionine + phosphate + diphosphate</text>
        <dbReference type="Rhea" id="RHEA:21080"/>
        <dbReference type="ChEBI" id="CHEBI:15377"/>
        <dbReference type="ChEBI" id="CHEBI:30616"/>
        <dbReference type="ChEBI" id="CHEBI:33019"/>
        <dbReference type="ChEBI" id="CHEBI:43474"/>
        <dbReference type="ChEBI" id="CHEBI:57844"/>
        <dbReference type="ChEBI" id="CHEBI:59789"/>
        <dbReference type="EC" id="2.5.1.6"/>
    </reaction>
</comment>
<comment type="cofactor">
    <cofactor evidence="1">
        <name>Mg(2+)</name>
        <dbReference type="ChEBI" id="CHEBI:18420"/>
    </cofactor>
    <text evidence="1">Binds 2 divalent ions per subunit.</text>
</comment>
<comment type="cofactor">
    <cofactor evidence="1">
        <name>K(+)</name>
        <dbReference type="ChEBI" id="CHEBI:29103"/>
    </cofactor>
    <text evidence="1">Binds 1 potassium ion per subunit.</text>
</comment>
<comment type="pathway">
    <text evidence="1">Amino-acid biosynthesis; S-adenosyl-L-methionine biosynthesis; S-adenosyl-L-methionine from L-methionine: step 1/1.</text>
</comment>
<comment type="subunit">
    <text evidence="1">Homotetramer; dimer of dimers.</text>
</comment>
<comment type="subcellular location">
    <subcellularLocation>
        <location evidence="1">Cytoplasm</location>
    </subcellularLocation>
</comment>
<comment type="similarity">
    <text evidence="1">Belongs to the AdoMet synthase family.</text>
</comment>
<evidence type="ECO:0000255" key="1">
    <source>
        <dbReference type="HAMAP-Rule" id="MF_00086"/>
    </source>
</evidence>
<sequence length="397" mass="43641">MLNNKRLFTSESVTEGHPDKIADQVSDAILDAILKDDPNARVACETTVTTGMALIAGEISTTTYVDIPKVVRETIKEIGYTRAKYGYDYETMAILTAIDEQSPDIAQGVDKALEYRDKDSEEEIEATGAGDQGLMFGYATNETETYMPLAIYLSHQLAKRLSDVRKDGTLNYLRPDGKVQVTVEYDENDNPVRIDTIVVSTQHAEDVTLEQIQEDIKAHVIYPTVPENLINEQTKFYINPTGRFVIGGPQGDAGLTGRKIIVDTYGGYARHGGGCFSGKDPTKVDRSAAYAARYVAKNIVAAGLADQCEVQLAYAIGVAEPVSIAIDTFGTGKVSEGQLVEAVRKHFDLRPAGIIKMLDLKQPIYKQTAAYGHFGRTDVLFPWEKLDKVEELKDAVK</sequence>
<feature type="chain" id="PRO_0000302985" description="S-adenosylmethionine synthase">
    <location>
        <begin position="1"/>
        <end position="397"/>
    </location>
</feature>
<feature type="region of interest" description="Flexible loop" evidence="1">
    <location>
        <begin position="101"/>
        <end position="111"/>
    </location>
</feature>
<feature type="binding site" description="in other chain" evidence="1">
    <location>
        <position position="17"/>
    </location>
    <ligand>
        <name>ATP</name>
        <dbReference type="ChEBI" id="CHEBI:30616"/>
        <note>ligand shared between two neighboring subunits</note>
    </ligand>
</feature>
<feature type="binding site" evidence="1">
    <location>
        <position position="19"/>
    </location>
    <ligand>
        <name>Mg(2+)</name>
        <dbReference type="ChEBI" id="CHEBI:18420"/>
    </ligand>
</feature>
<feature type="binding site" evidence="1">
    <location>
        <position position="45"/>
    </location>
    <ligand>
        <name>K(+)</name>
        <dbReference type="ChEBI" id="CHEBI:29103"/>
    </ligand>
</feature>
<feature type="binding site" description="in other chain" evidence="1">
    <location>
        <position position="58"/>
    </location>
    <ligand>
        <name>L-methionine</name>
        <dbReference type="ChEBI" id="CHEBI:57844"/>
        <note>ligand shared between two neighboring subunits</note>
    </ligand>
</feature>
<feature type="binding site" description="in other chain" evidence="1">
    <location>
        <position position="101"/>
    </location>
    <ligand>
        <name>L-methionine</name>
        <dbReference type="ChEBI" id="CHEBI:57844"/>
        <note>ligand shared between two neighboring subunits</note>
    </ligand>
</feature>
<feature type="binding site" description="in other chain" evidence="1">
    <location>
        <begin position="176"/>
        <end position="178"/>
    </location>
    <ligand>
        <name>ATP</name>
        <dbReference type="ChEBI" id="CHEBI:30616"/>
        <note>ligand shared between two neighboring subunits</note>
    </ligand>
</feature>
<feature type="binding site" description="in other chain" evidence="1">
    <location>
        <begin position="243"/>
        <end position="244"/>
    </location>
    <ligand>
        <name>ATP</name>
        <dbReference type="ChEBI" id="CHEBI:30616"/>
        <note>ligand shared between two neighboring subunits</note>
    </ligand>
</feature>
<feature type="binding site" evidence="1">
    <location>
        <position position="252"/>
    </location>
    <ligand>
        <name>ATP</name>
        <dbReference type="ChEBI" id="CHEBI:30616"/>
        <note>ligand shared between two neighboring subunits</note>
    </ligand>
</feature>
<feature type="binding site" evidence="1">
    <location>
        <position position="252"/>
    </location>
    <ligand>
        <name>L-methionine</name>
        <dbReference type="ChEBI" id="CHEBI:57844"/>
        <note>ligand shared between two neighboring subunits</note>
    </ligand>
</feature>
<feature type="binding site" description="in other chain" evidence="1">
    <location>
        <begin position="258"/>
        <end position="259"/>
    </location>
    <ligand>
        <name>ATP</name>
        <dbReference type="ChEBI" id="CHEBI:30616"/>
        <note>ligand shared between two neighboring subunits</note>
    </ligand>
</feature>
<feature type="binding site" evidence="1">
    <location>
        <position position="279"/>
    </location>
    <ligand>
        <name>ATP</name>
        <dbReference type="ChEBI" id="CHEBI:30616"/>
        <note>ligand shared between two neighboring subunits</note>
    </ligand>
</feature>
<feature type="binding site" description="in other chain" evidence="1">
    <location>
        <position position="283"/>
    </location>
    <ligand>
        <name>L-methionine</name>
        <dbReference type="ChEBI" id="CHEBI:57844"/>
        <note>ligand shared between two neighboring subunits</note>
    </ligand>
</feature>
<name>METK_STAA8</name>